<feature type="chain" id="PRO_0000183145" description="Crossover junction endodeoxyribonuclease RuvC">
    <location>
        <begin position="1"/>
        <end position="173"/>
    </location>
</feature>
<feature type="active site" evidence="1">
    <location>
        <position position="8"/>
    </location>
</feature>
<feature type="active site" evidence="1">
    <location>
        <position position="67"/>
    </location>
</feature>
<feature type="active site" evidence="1">
    <location>
        <position position="139"/>
    </location>
</feature>
<feature type="binding site" evidence="1">
    <location>
        <position position="8"/>
    </location>
    <ligand>
        <name>Mg(2+)</name>
        <dbReference type="ChEBI" id="CHEBI:18420"/>
        <label>1</label>
    </ligand>
</feature>
<feature type="binding site" evidence="1">
    <location>
        <position position="67"/>
    </location>
    <ligand>
        <name>Mg(2+)</name>
        <dbReference type="ChEBI" id="CHEBI:18420"/>
        <label>2</label>
    </ligand>
</feature>
<feature type="binding site" evidence="1">
    <location>
        <position position="139"/>
    </location>
    <ligand>
        <name>Mg(2+)</name>
        <dbReference type="ChEBI" id="CHEBI:18420"/>
        <label>1</label>
    </ligand>
</feature>
<name>RUVC_VIBVU</name>
<dbReference type="EC" id="3.1.21.10" evidence="1"/>
<dbReference type="EMBL" id="AE016795">
    <property type="protein sequence ID" value="AAO10542.1"/>
    <property type="molecule type" value="Genomic_DNA"/>
</dbReference>
<dbReference type="RefSeq" id="WP_011080036.1">
    <property type="nucleotide sequence ID" value="NC_004459.3"/>
</dbReference>
<dbReference type="SMR" id="Q8DAN6"/>
<dbReference type="GeneID" id="93896348"/>
<dbReference type="KEGG" id="vvu:VV1_2157"/>
<dbReference type="HOGENOM" id="CLU_091257_2_1_6"/>
<dbReference type="Proteomes" id="UP000002275">
    <property type="component" value="Chromosome 1"/>
</dbReference>
<dbReference type="GO" id="GO:0005737">
    <property type="term" value="C:cytoplasm"/>
    <property type="evidence" value="ECO:0007669"/>
    <property type="project" value="UniProtKB-SubCell"/>
</dbReference>
<dbReference type="GO" id="GO:0048476">
    <property type="term" value="C:Holliday junction resolvase complex"/>
    <property type="evidence" value="ECO:0007669"/>
    <property type="project" value="UniProtKB-UniRule"/>
</dbReference>
<dbReference type="GO" id="GO:0008821">
    <property type="term" value="F:crossover junction DNA endonuclease activity"/>
    <property type="evidence" value="ECO:0007669"/>
    <property type="project" value="UniProtKB-UniRule"/>
</dbReference>
<dbReference type="GO" id="GO:0003677">
    <property type="term" value="F:DNA binding"/>
    <property type="evidence" value="ECO:0007669"/>
    <property type="project" value="UniProtKB-KW"/>
</dbReference>
<dbReference type="GO" id="GO:0000287">
    <property type="term" value="F:magnesium ion binding"/>
    <property type="evidence" value="ECO:0007669"/>
    <property type="project" value="UniProtKB-UniRule"/>
</dbReference>
<dbReference type="GO" id="GO:0006310">
    <property type="term" value="P:DNA recombination"/>
    <property type="evidence" value="ECO:0007669"/>
    <property type="project" value="UniProtKB-UniRule"/>
</dbReference>
<dbReference type="GO" id="GO:0006281">
    <property type="term" value="P:DNA repair"/>
    <property type="evidence" value="ECO:0007669"/>
    <property type="project" value="UniProtKB-UniRule"/>
</dbReference>
<dbReference type="CDD" id="cd16962">
    <property type="entry name" value="RuvC"/>
    <property type="match status" value="1"/>
</dbReference>
<dbReference type="FunFam" id="3.30.420.10:FF:000002">
    <property type="entry name" value="Crossover junction endodeoxyribonuclease RuvC"/>
    <property type="match status" value="1"/>
</dbReference>
<dbReference type="Gene3D" id="3.30.420.10">
    <property type="entry name" value="Ribonuclease H-like superfamily/Ribonuclease H"/>
    <property type="match status" value="1"/>
</dbReference>
<dbReference type="HAMAP" id="MF_00034">
    <property type="entry name" value="RuvC"/>
    <property type="match status" value="1"/>
</dbReference>
<dbReference type="InterPro" id="IPR012337">
    <property type="entry name" value="RNaseH-like_sf"/>
</dbReference>
<dbReference type="InterPro" id="IPR036397">
    <property type="entry name" value="RNaseH_sf"/>
</dbReference>
<dbReference type="InterPro" id="IPR020563">
    <property type="entry name" value="X-over_junc_endoDNase_Mg_BS"/>
</dbReference>
<dbReference type="InterPro" id="IPR002176">
    <property type="entry name" value="X-over_junc_endoDNase_RuvC"/>
</dbReference>
<dbReference type="NCBIfam" id="TIGR00228">
    <property type="entry name" value="ruvC"/>
    <property type="match status" value="1"/>
</dbReference>
<dbReference type="PANTHER" id="PTHR30194">
    <property type="entry name" value="CROSSOVER JUNCTION ENDODEOXYRIBONUCLEASE RUVC"/>
    <property type="match status" value="1"/>
</dbReference>
<dbReference type="PANTHER" id="PTHR30194:SF3">
    <property type="entry name" value="CROSSOVER JUNCTION ENDODEOXYRIBONUCLEASE RUVC"/>
    <property type="match status" value="1"/>
</dbReference>
<dbReference type="Pfam" id="PF02075">
    <property type="entry name" value="RuvC"/>
    <property type="match status" value="1"/>
</dbReference>
<dbReference type="PRINTS" id="PR00696">
    <property type="entry name" value="RSOLVASERUVC"/>
</dbReference>
<dbReference type="SUPFAM" id="SSF53098">
    <property type="entry name" value="Ribonuclease H-like"/>
    <property type="match status" value="1"/>
</dbReference>
<dbReference type="PROSITE" id="PS01321">
    <property type="entry name" value="RUVC"/>
    <property type="match status" value="1"/>
</dbReference>
<keyword id="KW-0963">Cytoplasm</keyword>
<keyword id="KW-0227">DNA damage</keyword>
<keyword id="KW-0233">DNA recombination</keyword>
<keyword id="KW-0234">DNA repair</keyword>
<keyword id="KW-0238">DNA-binding</keyword>
<keyword id="KW-0255">Endonuclease</keyword>
<keyword id="KW-0378">Hydrolase</keyword>
<keyword id="KW-0460">Magnesium</keyword>
<keyword id="KW-0479">Metal-binding</keyword>
<keyword id="KW-0540">Nuclease</keyword>
<gene>
    <name evidence="1" type="primary">ruvC</name>
    <name type="ordered locus">VV1_2157</name>
</gene>
<comment type="function">
    <text evidence="1">The RuvA-RuvB-RuvC complex processes Holliday junction (HJ) DNA during genetic recombination and DNA repair. Endonuclease that resolves HJ intermediates. Cleaves cruciform DNA by making single-stranded nicks across the HJ at symmetrical positions within the homologous arms, yielding a 5'-phosphate and a 3'-hydroxyl group; requires a central core of homology in the junction. The consensus cleavage sequence is 5'-(A/T)TT(C/G)-3'. Cleavage occurs on the 3'-side of the TT dinucleotide at the point of strand exchange. HJ branch migration catalyzed by RuvA-RuvB allows RuvC to scan DNA until it finds its consensus sequence, where it cleaves and resolves the cruciform DNA.</text>
</comment>
<comment type="catalytic activity">
    <reaction evidence="1">
        <text>Endonucleolytic cleavage at a junction such as a reciprocal single-stranded crossover between two homologous DNA duplexes (Holliday junction).</text>
        <dbReference type="EC" id="3.1.21.10"/>
    </reaction>
</comment>
<comment type="cofactor">
    <cofactor evidence="1">
        <name>Mg(2+)</name>
        <dbReference type="ChEBI" id="CHEBI:18420"/>
    </cofactor>
    <text evidence="1">Binds 2 Mg(2+) ion per subunit.</text>
</comment>
<comment type="subunit">
    <text evidence="1">Homodimer which binds Holliday junction (HJ) DNA. The HJ becomes 2-fold symmetrical on binding to RuvC with unstacked arms; it has a different conformation from HJ DNA in complex with RuvA. In the full resolvosome a probable DNA-RuvA(4)-RuvB(12)-RuvC(2) complex forms which resolves the HJ.</text>
</comment>
<comment type="subcellular location">
    <subcellularLocation>
        <location evidence="1">Cytoplasm</location>
    </subcellularLocation>
</comment>
<comment type="similarity">
    <text evidence="1">Belongs to the RuvC family.</text>
</comment>
<proteinExistence type="inferred from homology"/>
<protein>
    <recommendedName>
        <fullName evidence="1">Crossover junction endodeoxyribonuclease RuvC</fullName>
        <ecNumber evidence="1">3.1.21.10</ecNumber>
    </recommendedName>
    <alternativeName>
        <fullName evidence="1">Holliday junction nuclease RuvC</fullName>
    </alternativeName>
    <alternativeName>
        <fullName evidence="1">Holliday junction resolvase RuvC</fullName>
    </alternativeName>
</protein>
<sequence length="173" mass="18436">MSIILGIDPGSRVTGYGVIRQNGRHLQYLGSGCIRTSEKDLPGRLKQIYAGVTEIITQFQPDAFAIEQVFMAKNADSALKLGQARGAAIVSAVNHDLPVYEYAARLIKQAVVGTGGADKAQVQHMVQHMLKLPAKPQADAADALGVAICHANTNKTLIALAGQATSAKRGRYR</sequence>
<organism>
    <name type="scientific">Vibrio vulnificus (strain CMCP6)</name>
    <dbReference type="NCBI Taxonomy" id="216895"/>
    <lineage>
        <taxon>Bacteria</taxon>
        <taxon>Pseudomonadati</taxon>
        <taxon>Pseudomonadota</taxon>
        <taxon>Gammaproteobacteria</taxon>
        <taxon>Vibrionales</taxon>
        <taxon>Vibrionaceae</taxon>
        <taxon>Vibrio</taxon>
    </lineage>
</organism>
<reference key="1">
    <citation type="submission" date="2002-12" db="EMBL/GenBank/DDBJ databases">
        <title>Complete genome sequence of Vibrio vulnificus CMCP6.</title>
        <authorList>
            <person name="Rhee J.H."/>
            <person name="Kim S.Y."/>
            <person name="Chung S.S."/>
            <person name="Kim J.J."/>
            <person name="Moon Y.H."/>
            <person name="Jeong H."/>
            <person name="Choy H.E."/>
        </authorList>
    </citation>
    <scope>NUCLEOTIDE SEQUENCE [LARGE SCALE GENOMIC DNA]</scope>
    <source>
        <strain>CMCP6</strain>
    </source>
</reference>
<accession>Q8DAN6</accession>
<evidence type="ECO:0000255" key="1">
    <source>
        <dbReference type="HAMAP-Rule" id="MF_00034"/>
    </source>
</evidence>